<dbReference type="EMBL" id="CP000046">
    <property type="protein sequence ID" value="AAW37738.1"/>
    <property type="molecule type" value="Genomic_DNA"/>
</dbReference>
<dbReference type="RefSeq" id="WP_000765183.1">
    <property type="nucleotide sequence ID" value="NZ_JBGOFO010000005.1"/>
</dbReference>
<dbReference type="KEGG" id="sac:SACOL0629"/>
<dbReference type="HOGENOM" id="CLU_096548_3_3_9"/>
<dbReference type="Proteomes" id="UP000000530">
    <property type="component" value="Chromosome"/>
</dbReference>
<dbReference type="GO" id="GO:0005886">
    <property type="term" value="C:plasma membrane"/>
    <property type="evidence" value="ECO:0007669"/>
    <property type="project" value="UniProtKB-SubCell"/>
</dbReference>
<dbReference type="InterPro" id="IPR006696">
    <property type="entry name" value="DUF423"/>
</dbReference>
<dbReference type="PANTHER" id="PTHR43461">
    <property type="entry name" value="TRANSMEMBRANE PROTEIN 256"/>
    <property type="match status" value="1"/>
</dbReference>
<dbReference type="PANTHER" id="PTHR43461:SF1">
    <property type="entry name" value="TRANSMEMBRANE PROTEIN 256"/>
    <property type="match status" value="1"/>
</dbReference>
<dbReference type="Pfam" id="PF04241">
    <property type="entry name" value="DUF423"/>
    <property type="match status" value="1"/>
</dbReference>
<accession>Q5HI93</accession>
<proteinExistence type="inferred from homology"/>
<sequence>MKLFIILGALNAMMAVGTGAFGAHGLQGKISDHYLSVWEKATTYQMYHGLALLIIGVISGTTSINVNWAGWLIFAGIIFFSGSLYILVLTQIKVLGAITPIGGVLFIIGWIMLIIATFKFAG</sequence>
<reference key="1">
    <citation type="journal article" date="2005" name="J. Bacteriol.">
        <title>Insights on evolution of virulence and resistance from the complete genome analysis of an early methicillin-resistant Staphylococcus aureus strain and a biofilm-producing methicillin-resistant Staphylococcus epidermidis strain.</title>
        <authorList>
            <person name="Gill S.R."/>
            <person name="Fouts D.E."/>
            <person name="Archer G.L."/>
            <person name="Mongodin E.F."/>
            <person name="DeBoy R.T."/>
            <person name="Ravel J."/>
            <person name="Paulsen I.T."/>
            <person name="Kolonay J.F."/>
            <person name="Brinkac L.M."/>
            <person name="Beanan M.J."/>
            <person name="Dodson R.J."/>
            <person name="Daugherty S.C."/>
            <person name="Madupu R."/>
            <person name="Angiuoli S.V."/>
            <person name="Durkin A.S."/>
            <person name="Haft D.H."/>
            <person name="Vamathevan J.J."/>
            <person name="Khouri H."/>
            <person name="Utterback T.R."/>
            <person name="Lee C."/>
            <person name="Dimitrov G."/>
            <person name="Jiang L."/>
            <person name="Qin H."/>
            <person name="Weidman J."/>
            <person name="Tran K."/>
            <person name="Kang K.H."/>
            <person name="Hance I.R."/>
            <person name="Nelson K.E."/>
            <person name="Fraser C.M."/>
        </authorList>
    </citation>
    <scope>NUCLEOTIDE SEQUENCE [LARGE SCALE GENOMIC DNA]</scope>
    <source>
        <strain>COL</strain>
    </source>
</reference>
<name>Y629_STAAC</name>
<feature type="chain" id="PRO_0000249030" description="UPF0382 membrane protein SACOL0629">
    <location>
        <begin position="1"/>
        <end position="122"/>
    </location>
</feature>
<feature type="transmembrane region" description="Helical" evidence="1">
    <location>
        <begin position="3"/>
        <end position="23"/>
    </location>
</feature>
<feature type="transmembrane region" description="Helical" evidence="1">
    <location>
        <begin position="46"/>
        <end position="66"/>
    </location>
</feature>
<feature type="transmembrane region" description="Helical" evidence="1">
    <location>
        <begin position="69"/>
        <end position="89"/>
    </location>
</feature>
<feature type="transmembrane region" description="Helical" evidence="1">
    <location>
        <begin position="98"/>
        <end position="118"/>
    </location>
</feature>
<comment type="subcellular location">
    <subcellularLocation>
        <location evidence="2">Cell membrane</location>
        <topology evidence="2">Multi-pass membrane protein</topology>
    </subcellularLocation>
</comment>
<comment type="similarity">
    <text evidence="2">Belongs to the UPF0382 family.</text>
</comment>
<organism>
    <name type="scientific">Staphylococcus aureus (strain COL)</name>
    <dbReference type="NCBI Taxonomy" id="93062"/>
    <lineage>
        <taxon>Bacteria</taxon>
        <taxon>Bacillati</taxon>
        <taxon>Bacillota</taxon>
        <taxon>Bacilli</taxon>
        <taxon>Bacillales</taxon>
        <taxon>Staphylococcaceae</taxon>
        <taxon>Staphylococcus</taxon>
    </lineage>
</organism>
<protein>
    <recommendedName>
        <fullName>UPF0382 membrane protein SACOL0629</fullName>
    </recommendedName>
</protein>
<keyword id="KW-1003">Cell membrane</keyword>
<keyword id="KW-0472">Membrane</keyword>
<keyword id="KW-0812">Transmembrane</keyword>
<keyword id="KW-1133">Transmembrane helix</keyword>
<evidence type="ECO:0000255" key="1"/>
<evidence type="ECO:0000305" key="2"/>
<gene>
    <name type="ordered locus">SACOL0629</name>
</gene>